<dbReference type="EMBL" id="AL591982">
    <property type="protein sequence ID" value="CAD00159.1"/>
    <property type="molecule type" value="Genomic_DNA"/>
</dbReference>
<dbReference type="PIR" id="AI1334">
    <property type="entry name" value="AI1334"/>
</dbReference>
<dbReference type="RefSeq" id="NP_465605.1">
    <property type="nucleotide sequence ID" value="NC_003210.1"/>
</dbReference>
<dbReference type="SMR" id="Q8Y5I1"/>
<dbReference type="STRING" id="169963.gene:17594766"/>
<dbReference type="PaxDb" id="169963-lmo2081"/>
<dbReference type="EnsemblBacteria" id="CAD00159">
    <property type="protein sequence ID" value="CAD00159"/>
    <property type="gene ID" value="CAD00159"/>
</dbReference>
<dbReference type="GeneID" id="987918"/>
<dbReference type="KEGG" id="lmo:lmo2081"/>
<dbReference type="PATRIC" id="fig|169963.11.peg.2131"/>
<dbReference type="eggNOG" id="COG0239">
    <property type="taxonomic scope" value="Bacteria"/>
</dbReference>
<dbReference type="HOGENOM" id="CLU_114342_2_3_9"/>
<dbReference type="OrthoDB" id="9815830at2"/>
<dbReference type="PhylomeDB" id="Q8Y5I1"/>
<dbReference type="BioCyc" id="LMON169963:LMO2081-MONOMER"/>
<dbReference type="Proteomes" id="UP000000817">
    <property type="component" value="Chromosome"/>
</dbReference>
<dbReference type="GO" id="GO:0005886">
    <property type="term" value="C:plasma membrane"/>
    <property type="evidence" value="ECO:0000318"/>
    <property type="project" value="GO_Central"/>
</dbReference>
<dbReference type="GO" id="GO:0062054">
    <property type="term" value="F:fluoride channel activity"/>
    <property type="evidence" value="ECO:0007669"/>
    <property type="project" value="UniProtKB-UniRule"/>
</dbReference>
<dbReference type="GO" id="GO:1903425">
    <property type="term" value="F:fluoride transmembrane transporter activity"/>
    <property type="evidence" value="ECO:0000318"/>
    <property type="project" value="GO_Central"/>
</dbReference>
<dbReference type="GO" id="GO:0046872">
    <property type="term" value="F:metal ion binding"/>
    <property type="evidence" value="ECO:0007669"/>
    <property type="project" value="UniProtKB-KW"/>
</dbReference>
<dbReference type="GO" id="GO:0140114">
    <property type="term" value="P:cellular detoxification of fluoride"/>
    <property type="evidence" value="ECO:0007669"/>
    <property type="project" value="UniProtKB-UniRule"/>
</dbReference>
<dbReference type="GO" id="GO:1903424">
    <property type="term" value="P:fluoride transmembrane transport"/>
    <property type="evidence" value="ECO:0000318"/>
    <property type="project" value="GO_Central"/>
</dbReference>
<dbReference type="HAMAP" id="MF_00454">
    <property type="entry name" value="FluC"/>
    <property type="match status" value="1"/>
</dbReference>
<dbReference type="InterPro" id="IPR003691">
    <property type="entry name" value="FluC"/>
</dbReference>
<dbReference type="NCBIfam" id="NF010801">
    <property type="entry name" value="PRK14205.1"/>
    <property type="match status" value="1"/>
</dbReference>
<dbReference type="NCBIfam" id="NF010810">
    <property type="entry name" value="PRK14214.1"/>
    <property type="match status" value="1"/>
</dbReference>
<dbReference type="PANTHER" id="PTHR28259">
    <property type="entry name" value="FLUORIDE EXPORT PROTEIN 1-RELATED"/>
    <property type="match status" value="1"/>
</dbReference>
<dbReference type="PANTHER" id="PTHR28259:SF16">
    <property type="entry name" value="FLUORIDE-SPECIFIC ION CHANNEL FLUC 2"/>
    <property type="match status" value="1"/>
</dbReference>
<dbReference type="Pfam" id="PF02537">
    <property type="entry name" value="CRCB"/>
    <property type="match status" value="1"/>
</dbReference>
<keyword id="KW-1003">Cell membrane</keyword>
<keyword id="KW-0407">Ion channel</keyword>
<keyword id="KW-0406">Ion transport</keyword>
<keyword id="KW-0472">Membrane</keyword>
<keyword id="KW-0479">Metal-binding</keyword>
<keyword id="KW-1185">Reference proteome</keyword>
<keyword id="KW-0915">Sodium</keyword>
<keyword id="KW-0812">Transmembrane</keyword>
<keyword id="KW-1133">Transmembrane helix</keyword>
<keyword id="KW-0813">Transport</keyword>
<comment type="function">
    <text evidence="1">Fluoride-specific ion channel. Important for reducing fluoride concentration in the cell, thus reducing its toxicity.</text>
</comment>
<comment type="catalytic activity">
    <reaction evidence="1">
        <text>fluoride(in) = fluoride(out)</text>
        <dbReference type="Rhea" id="RHEA:76159"/>
        <dbReference type="ChEBI" id="CHEBI:17051"/>
    </reaction>
    <physiologicalReaction direction="left-to-right" evidence="1">
        <dbReference type="Rhea" id="RHEA:76160"/>
    </physiologicalReaction>
</comment>
<comment type="activity regulation">
    <text evidence="1">Na(+) is not transported, but it plays an essential structural role and its presence is essential for fluoride channel function.</text>
</comment>
<comment type="subcellular location">
    <subcellularLocation>
        <location evidence="1">Cell membrane</location>
        <topology evidence="1">Multi-pass membrane protein</topology>
    </subcellularLocation>
</comment>
<comment type="similarity">
    <text evidence="1">Belongs to the fluoride channel Fluc/FEX (TC 1.A.43) family.</text>
</comment>
<accession>Q8Y5I1</accession>
<organism>
    <name type="scientific">Listeria monocytogenes serovar 1/2a (strain ATCC BAA-679 / EGD-e)</name>
    <dbReference type="NCBI Taxonomy" id="169963"/>
    <lineage>
        <taxon>Bacteria</taxon>
        <taxon>Bacillati</taxon>
        <taxon>Bacillota</taxon>
        <taxon>Bacilli</taxon>
        <taxon>Bacillales</taxon>
        <taxon>Listeriaceae</taxon>
        <taxon>Listeria</taxon>
    </lineage>
</organism>
<name>FLUC1_LISMO</name>
<evidence type="ECO:0000255" key="1">
    <source>
        <dbReference type="HAMAP-Rule" id="MF_00454"/>
    </source>
</evidence>
<feature type="chain" id="PRO_0000110129" description="Fluoride-specific ion channel FluC 1">
    <location>
        <begin position="1"/>
        <end position="118"/>
    </location>
</feature>
<feature type="transmembrane region" description="Helical" evidence="1">
    <location>
        <begin position="5"/>
        <end position="25"/>
    </location>
</feature>
<feature type="transmembrane region" description="Helical" evidence="1">
    <location>
        <begin position="47"/>
        <end position="67"/>
    </location>
</feature>
<feature type="transmembrane region" description="Helical" evidence="1">
    <location>
        <begin position="98"/>
        <end position="118"/>
    </location>
</feature>
<feature type="binding site" evidence="1">
    <location>
        <position position="71"/>
    </location>
    <ligand>
        <name>Na(+)</name>
        <dbReference type="ChEBI" id="CHEBI:29101"/>
        <note>structural</note>
    </ligand>
</feature>
<feature type="binding site" evidence="1">
    <location>
        <position position="74"/>
    </location>
    <ligand>
        <name>Na(+)</name>
        <dbReference type="ChEBI" id="CHEBI:29101"/>
        <note>structural</note>
    </ligand>
</feature>
<sequence length="118" mass="13034">MLVNFLLVGFGAALGAMLRYGISVLVKSKWKTNFPSATFFINITGSFLLGFLVSSALGPVWQLFLGTGFMGGYTTFSTFKVESMELKWKTNYRVLFSYLGFTYVFGLIAAFLGMMLGV</sequence>
<proteinExistence type="inferred from homology"/>
<gene>
    <name evidence="1" type="primary">fluC1</name>
    <name evidence="1" type="synonym">crcB1</name>
    <name type="ordered locus">lmo2081</name>
</gene>
<protein>
    <recommendedName>
        <fullName evidence="1">Fluoride-specific ion channel FluC 1</fullName>
    </recommendedName>
</protein>
<reference key="1">
    <citation type="journal article" date="2001" name="Science">
        <title>Comparative genomics of Listeria species.</title>
        <authorList>
            <person name="Glaser P."/>
            <person name="Frangeul L."/>
            <person name="Buchrieser C."/>
            <person name="Rusniok C."/>
            <person name="Amend A."/>
            <person name="Baquero F."/>
            <person name="Berche P."/>
            <person name="Bloecker H."/>
            <person name="Brandt P."/>
            <person name="Chakraborty T."/>
            <person name="Charbit A."/>
            <person name="Chetouani F."/>
            <person name="Couve E."/>
            <person name="de Daruvar A."/>
            <person name="Dehoux P."/>
            <person name="Domann E."/>
            <person name="Dominguez-Bernal G."/>
            <person name="Duchaud E."/>
            <person name="Durant L."/>
            <person name="Dussurget O."/>
            <person name="Entian K.-D."/>
            <person name="Fsihi H."/>
            <person name="Garcia-del Portillo F."/>
            <person name="Garrido P."/>
            <person name="Gautier L."/>
            <person name="Goebel W."/>
            <person name="Gomez-Lopez N."/>
            <person name="Hain T."/>
            <person name="Hauf J."/>
            <person name="Jackson D."/>
            <person name="Jones L.-M."/>
            <person name="Kaerst U."/>
            <person name="Kreft J."/>
            <person name="Kuhn M."/>
            <person name="Kunst F."/>
            <person name="Kurapkat G."/>
            <person name="Madueno E."/>
            <person name="Maitournam A."/>
            <person name="Mata Vicente J."/>
            <person name="Ng E."/>
            <person name="Nedjari H."/>
            <person name="Nordsiek G."/>
            <person name="Novella S."/>
            <person name="de Pablos B."/>
            <person name="Perez-Diaz J.-C."/>
            <person name="Purcell R."/>
            <person name="Remmel B."/>
            <person name="Rose M."/>
            <person name="Schlueter T."/>
            <person name="Simoes N."/>
            <person name="Tierrez A."/>
            <person name="Vazquez-Boland J.-A."/>
            <person name="Voss H."/>
            <person name="Wehland J."/>
            <person name="Cossart P."/>
        </authorList>
    </citation>
    <scope>NUCLEOTIDE SEQUENCE [LARGE SCALE GENOMIC DNA]</scope>
    <source>
        <strain>ATCC BAA-679 / EGD-e</strain>
    </source>
</reference>